<proteinExistence type="inferred from homology"/>
<name>NDK_FRAAA</name>
<organism>
    <name type="scientific">Frankia alni (strain DSM 45986 / CECT 9034 / ACN14a)</name>
    <dbReference type="NCBI Taxonomy" id="326424"/>
    <lineage>
        <taxon>Bacteria</taxon>
        <taxon>Bacillati</taxon>
        <taxon>Actinomycetota</taxon>
        <taxon>Actinomycetes</taxon>
        <taxon>Frankiales</taxon>
        <taxon>Frankiaceae</taxon>
        <taxon>Frankia</taxon>
    </lineage>
</organism>
<protein>
    <recommendedName>
        <fullName evidence="1">Nucleoside diphosphate kinase</fullName>
        <shortName evidence="1">NDK</shortName>
        <shortName evidence="1">NDP kinase</shortName>
        <ecNumber evidence="1">2.7.4.6</ecNumber>
    </recommendedName>
    <alternativeName>
        <fullName evidence="1">Nucleoside-2-P kinase</fullName>
    </alternativeName>
</protein>
<keyword id="KW-0067">ATP-binding</keyword>
<keyword id="KW-0963">Cytoplasm</keyword>
<keyword id="KW-0418">Kinase</keyword>
<keyword id="KW-0460">Magnesium</keyword>
<keyword id="KW-0479">Metal-binding</keyword>
<keyword id="KW-0546">Nucleotide metabolism</keyword>
<keyword id="KW-0547">Nucleotide-binding</keyword>
<keyword id="KW-0597">Phosphoprotein</keyword>
<keyword id="KW-1185">Reference proteome</keyword>
<keyword id="KW-0808">Transferase</keyword>
<gene>
    <name evidence="1" type="primary">ndk</name>
    <name type="ordered locus">FRAAL1915</name>
</gene>
<accession>Q0RPG8</accession>
<comment type="function">
    <text evidence="1">Major role in the synthesis of nucleoside triphosphates other than ATP. The ATP gamma phosphate is transferred to the NDP beta phosphate via a ping-pong mechanism, using a phosphorylated active-site intermediate.</text>
</comment>
<comment type="catalytic activity">
    <reaction evidence="1">
        <text>a 2'-deoxyribonucleoside 5'-diphosphate + ATP = a 2'-deoxyribonucleoside 5'-triphosphate + ADP</text>
        <dbReference type="Rhea" id="RHEA:44640"/>
        <dbReference type="ChEBI" id="CHEBI:30616"/>
        <dbReference type="ChEBI" id="CHEBI:61560"/>
        <dbReference type="ChEBI" id="CHEBI:73316"/>
        <dbReference type="ChEBI" id="CHEBI:456216"/>
        <dbReference type="EC" id="2.7.4.6"/>
    </reaction>
</comment>
<comment type="catalytic activity">
    <reaction evidence="1">
        <text>a ribonucleoside 5'-diphosphate + ATP = a ribonucleoside 5'-triphosphate + ADP</text>
        <dbReference type="Rhea" id="RHEA:18113"/>
        <dbReference type="ChEBI" id="CHEBI:30616"/>
        <dbReference type="ChEBI" id="CHEBI:57930"/>
        <dbReference type="ChEBI" id="CHEBI:61557"/>
        <dbReference type="ChEBI" id="CHEBI:456216"/>
        <dbReference type="EC" id="2.7.4.6"/>
    </reaction>
</comment>
<comment type="cofactor">
    <cofactor evidence="1">
        <name>Mg(2+)</name>
        <dbReference type="ChEBI" id="CHEBI:18420"/>
    </cofactor>
</comment>
<comment type="subunit">
    <text evidence="1">Homotetramer.</text>
</comment>
<comment type="subcellular location">
    <subcellularLocation>
        <location evidence="1">Cytoplasm</location>
    </subcellularLocation>
</comment>
<comment type="similarity">
    <text evidence="1">Belongs to the NDK family.</text>
</comment>
<evidence type="ECO:0000255" key="1">
    <source>
        <dbReference type="HAMAP-Rule" id="MF_00451"/>
    </source>
</evidence>
<dbReference type="EC" id="2.7.4.6" evidence="1"/>
<dbReference type="EMBL" id="CT573213">
    <property type="protein sequence ID" value="CAJ60564.1"/>
    <property type="molecule type" value="Genomic_DNA"/>
</dbReference>
<dbReference type="RefSeq" id="WP_011603090.1">
    <property type="nucleotide sequence ID" value="NC_008278.1"/>
</dbReference>
<dbReference type="SMR" id="Q0RPG8"/>
<dbReference type="STRING" id="326424.FRAAL1915"/>
<dbReference type="KEGG" id="fal:FRAAL1915"/>
<dbReference type="eggNOG" id="COG0105">
    <property type="taxonomic scope" value="Bacteria"/>
</dbReference>
<dbReference type="HOGENOM" id="CLU_060216_6_3_11"/>
<dbReference type="OrthoDB" id="9801161at2"/>
<dbReference type="Proteomes" id="UP000000657">
    <property type="component" value="Chromosome"/>
</dbReference>
<dbReference type="GO" id="GO:0005737">
    <property type="term" value="C:cytoplasm"/>
    <property type="evidence" value="ECO:0007669"/>
    <property type="project" value="UniProtKB-SubCell"/>
</dbReference>
<dbReference type="GO" id="GO:0005524">
    <property type="term" value="F:ATP binding"/>
    <property type="evidence" value="ECO:0007669"/>
    <property type="project" value="UniProtKB-UniRule"/>
</dbReference>
<dbReference type="GO" id="GO:0046872">
    <property type="term" value="F:metal ion binding"/>
    <property type="evidence" value="ECO:0007669"/>
    <property type="project" value="UniProtKB-KW"/>
</dbReference>
<dbReference type="GO" id="GO:0004550">
    <property type="term" value="F:nucleoside diphosphate kinase activity"/>
    <property type="evidence" value="ECO:0007669"/>
    <property type="project" value="UniProtKB-UniRule"/>
</dbReference>
<dbReference type="GO" id="GO:0006241">
    <property type="term" value="P:CTP biosynthetic process"/>
    <property type="evidence" value="ECO:0007669"/>
    <property type="project" value="UniProtKB-UniRule"/>
</dbReference>
<dbReference type="GO" id="GO:0006183">
    <property type="term" value="P:GTP biosynthetic process"/>
    <property type="evidence" value="ECO:0007669"/>
    <property type="project" value="UniProtKB-UniRule"/>
</dbReference>
<dbReference type="GO" id="GO:0006228">
    <property type="term" value="P:UTP biosynthetic process"/>
    <property type="evidence" value="ECO:0007669"/>
    <property type="project" value="UniProtKB-UniRule"/>
</dbReference>
<dbReference type="CDD" id="cd04413">
    <property type="entry name" value="NDPk_I"/>
    <property type="match status" value="1"/>
</dbReference>
<dbReference type="FunFam" id="3.30.70.141:FF:000003">
    <property type="entry name" value="Nucleoside diphosphate kinase"/>
    <property type="match status" value="1"/>
</dbReference>
<dbReference type="Gene3D" id="3.30.70.141">
    <property type="entry name" value="Nucleoside diphosphate kinase-like domain"/>
    <property type="match status" value="1"/>
</dbReference>
<dbReference type="HAMAP" id="MF_00451">
    <property type="entry name" value="NDP_kinase"/>
    <property type="match status" value="1"/>
</dbReference>
<dbReference type="InterPro" id="IPR034907">
    <property type="entry name" value="NDK-like_dom"/>
</dbReference>
<dbReference type="InterPro" id="IPR036850">
    <property type="entry name" value="NDK-like_dom_sf"/>
</dbReference>
<dbReference type="InterPro" id="IPR001564">
    <property type="entry name" value="Nucleoside_diP_kinase"/>
</dbReference>
<dbReference type="InterPro" id="IPR023005">
    <property type="entry name" value="Nucleoside_diP_kinase_AS"/>
</dbReference>
<dbReference type="NCBIfam" id="NF001908">
    <property type="entry name" value="PRK00668.1"/>
    <property type="match status" value="1"/>
</dbReference>
<dbReference type="PANTHER" id="PTHR11349">
    <property type="entry name" value="NUCLEOSIDE DIPHOSPHATE KINASE"/>
    <property type="match status" value="1"/>
</dbReference>
<dbReference type="Pfam" id="PF00334">
    <property type="entry name" value="NDK"/>
    <property type="match status" value="1"/>
</dbReference>
<dbReference type="PRINTS" id="PR01243">
    <property type="entry name" value="NUCDPKINASE"/>
</dbReference>
<dbReference type="SMART" id="SM00562">
    <property type="entry name" value="NDK"/>
    <property type="match status" value="1"/>
</dbReference>
<dbReference type="SUPFAM" id="SSF54919">
    <property type="entry name" value="Nucleoside diphosphate kinase, NDK"/>
    <property type="match status" value="1"/>
</dbReference>
<dbReference type="PROSITE" id="PS00469">
    <property type="entry name" value="NDPK"/>
    <property type="match status" value="1"/>
</dbReference>
<dbReference type="PROSITE" id="PS51374">
    <property type="entry name" value="NDPK_LIKE"/>
    <property type="match status" value="1"/>
</dbReference>
<reference key="1">
    <citation type="journal article" date="2007" name="Genome Res.">
        <title>Genome characteristics of facultatively symbiotic Frankia sp. strains reflect host range and host plant biogeography.</title>
        <authorList>
            <person name="Normand P."/>
            <person name="Lapierre P."/>
            <person name="Tisa L.S."/>
            <person name="Gogarten J.P."/>
            <person name="Alloisio N."/>
            <person name="Bagnarol E."/>
            <person name="Bassi C.A."/>
            <person name="Berry A.M."/>
            <person name="Bickhart D.M."/>
            <person name="Choisne N."/>
            <person name="Couloux A."/>
            <person name="Cournoyer B."/>
            <person name="Cruveiller S."/>
            <person name="Daubin V."/>
            <person name="Demange N."/>
            <person name="Francino M.P."/>
            <person name="Goltsman E."/>
            <person name="Huang Y."/>
            <person name="Kopp O.R."/>
            <person name="Labarre L."/>
            <person name="Lapidus A."/>
            <person name="Lavire C."/>
            <person name="Marechal J."/>
            <person name="Martinez M."/>
            <person name="Mastronunzio J.E."/>
            <person name="Mullin B.C."/>
            <person name="Niemann J."/>
            <person name="Pujic P."/>
            <person name="Rawnsley T."/>
            <person name="Rouy Z."/>
            <person name="Schenowitz C."/>
            <person name="Sellstedt A."/>
            <person name="Tavares F."/>
            <person name="Tomkins J.P."/>
            <person name="Vallenet D."/>
            <person name="Valverde C."/>
            <person name="Wall L.G."/>
            <person name="Wang Y."/>
            <person name="Medigue C."/>
            <person name="Benson D.R."/>
        </authorList>
    </citation>
    <scope>NUCLEOTIDE SEQUENCE [LARGE SCALE GENOMIC DNA]</scope>
    <source>
        <strain>DSM 45986 / CECT 9034 / ACN14a</strain>
    </source>
</reference>
<feature type="chain" id="PRO_1000026234" description="Nucleoside diphosphate kinase">
    <location>
        <begin position="1"/>
        <end position="137"/>
    </location>
</feature>
<feature type="active site" description="Pros-phosphohistidine intermediate" evidence="1">
    <location>
        <position position="117"/>
    </location>
</feature>
<feature type="binding site" evidence="1">
    <location>
        <position position="11"/>
    </location>
    <ligand>
        <name>ATP</name>
        <dbReference type="ChEBI" id="CHEBI:30616"/>
    </ligand>
</feature>
<feature type="binding site" evidence="1">
    <location>
        <position position="59"/>
    </location>
    <ligand>
        <name>ATP</name>
        <dbReference type="ChEBI" id="CHEBI:30616"/>
    </ligand>
</feature>
<feature type="binding site" evidence="1">
    <location>
        <position position="87"/>
    </location>
    <ligand>
        <name>ATP</name>
        <dbReference type="ChEBI" id="CHEBI:30616"/>
    </ligand>
</feature>
<feature type="binding site" evidence="1">
    <location>
        <position position="93"/>
    </location>
    <ligand>
        <name>ATP</name>
        <dbReference type="ChEBI" id="CHEBI:30616"/>
    </ligand>
</feature>
<feature type="binding site" evidence="1">
    <location>
        <position position="104"/>
    </location>
    <ligand>
        <name>ATP</name>
        <dbReference type="ChEBI" id="CHEBI:30616"/>
    </ligand>
</feature>
<feature type="binding site" evidence="1">
    <location>
        <position position="114"/>
    </location>
    <ligand>
        <name>ATP</name>
        <dbReference type="ChEBI" id="CHEBI:30616"/>
    </ligand>
</feature>
<sequence length="137" mass="14505">MSAERTLILVKPDGVSRGLVGEVVGRLERKGLTLVALELRTLERSVAETHYGEHASKPFFGELVDFIVSGPLVALVAEGPRAVEASRGLIGATDPVKAAPGSLRGDYALEIGQNLVHGSDSPESAKREIDLFFPGLS</sequence>